<feature type="chain" id="PRO_1000115333" description="Chorismate synthase">
    <location>
        <begin position="1"/>
        <end position="366"/>
    </location>
</feature>
<feature type="binding site" evidence="1">
    <location>
        <position position="48"/>
    </location>
    <ligand>
        <name>NADP(+)</name>
        <dbReference type="ChEBI" id="CHEBI:58349"/>
    </ligand>
</feature>
<feature type="binding site" evidence="1">
    <location>
        <position position="54"/>
    </location>
    <ligand>
        <name>NADP(+)</name>
        <dbReference type="ChEBI" id="CHEBI:58349"/>
    </ligand>
</feature>
<feature type="binding site" evidence="1">
    <location>
        <begin position="125"/>
        <end position="127"/>
    </location>
    <ligand>
        <name>FMN</name>
        <dbReference type="ChEBI" id="CHEBI:58210"/>
    </ligand>
</feature>
<feature type="binding site" evidence="1">
    <location>
        <begin position="238"/>
        <end position="239"/>
    </location>
    <ligand>
        <name>FMN</name>
        <dbReference type="ChEBI" id="CHEBI:58210"/>
    </ligand>
</feature>
<feature type="binding site" evidence="1">
    <location>
        <position position="278"/>
    </location>
    <ligand>
        <name>FMN</name>
        <dbReference type="ChEBI" id="CHEBI:58210"/>
    </ligand>
</feature>
<feature type="binding site" evidence="1">
    <location>
        <begin position="293"/>
        <end position="297"/>
    </location>
    <ligand>
        <name>FMN</name>
        <dbReference type="ChEBI" id="CHEBI:58210"/>
    </ligand>
</feature>
<feature type="binding site" evidence="1">
    <location>
        <position position="319"/>
    </location>
    <ligand>
        <name>FMN</name>
        <dbReference type="ChEBI" id="CHEBI:58210"/>
    </ligand>
</feature>
<dbReference type="EC" id="4.2.3.5" evidence="1"/>
<dbReference type="EMBL" id="CP000958">
    <property type="protein sequence ID" value="ACA90613.1"/>
    <property type="molecule type" value="Genomic_DNA"/>
</dbReference>
<dbReference type="RefSeq" id="WP_012328360.1">
    <property type="nucleotide sequence ID" value="NC_010508.1"/>
</dbReference>
<dbReference type="SMR" id="B1K077"/>
<dbReference type="GeneID" id="83048233"/>
<dbReference type="KEGG" id="bcm:Bcenmc03_1438"/>
<dbReference type="HOGENOM" id="CLU_034547_0_2_4"/>
<dbReference type="UniPathway" id="UPA00053">
    <property type="reaction ID" value="UER00090"/>
</dbReference>
<dbReference type="Proteomes" id="UP000002169">
    <property type="component" value="Chromosome 1"/>
</dbReference>
<dbReference type="GO" id="GO:0005829">
    <property type="term" value="C:cytosol"/>
    <property type="evidence" value="ECO:0007669"/>
    <property type="project" value="TreeGrafter"/>
</dbReference>
<dbReference type="GO" id="GO:0004107">
    <property type="term" value="F:chorismate synthase activity"/>
    <property type="evidence" value="ECO:0007669"/>
    <property type="project" value="UniProtKB-UniRule"/>
</dbReference>
<dbReference type="GO" id="GO:0010181">
    <property type="term" value="F:FMN binding"/>
    <property type="evidence" value="ECO:0007669"/>
    <property type="project" value="TreeGrafter"/>
</dbReference>
<dbReference type="GO" id="GO:0008652">
    <property type="term" value="P:amino acid biosynthetic process"/>
    <property type="evidence" value="ECO:0007669"/>
    <property type="project" value="UniProtKB-KW"/>
</dbReference>
<dbReference type="GO" id="GO:0009073">
    <property type="term" value="P:aromatic amino acid family biosynthetic process"/>
    <property type="evidence" value="ECO:0007669"/>
    <property type="project" value="UniProtKB-KW"/>
</dbReference>
<dbReference type="GO" id="GO:0009423">
    <property type="term" value="P:chorismate biosynthetic process"/>
    <property type="evidence" value="ECO:0007669"/>
    <property type="project" value="UniProtKB-UniRule"/>
</dbReference>
<dbReference type="CDD" id="cd07304">
    <property type="entry name" value="Chorismate_synthase"/>
    <property type="match status" value="1"/>
</dbReference>
<dbReference type="FunFam" id="3.60.150.10:FF:000001">
    <property type="entry name" value="Chorismate synthase"/>
    <property type="match status" value="1"/>
</dbReference>
<dbReference type="Gene3D" id="3.60.150.10">
    <property type="entry name" value="Chorismate synthase AroC"/>
    <property type="match status" value="1"/>
</dbReference>
<dbReference type="HAMAP" id="MF_00300">
    <property type="entry name" value="Chorismate_synth"/>
    <property type="match status" value="1"/>
</dbReference>
<dbReference type="InterPro" id="IPR000453">
    <property type="entry name" value="Chorismate_synth"/>
</dbReference>
<dbReference type="InterPro" id="IPR035904">
    <property type="entry name" value="Chorismate_synth_AroC_sf"/>
</dbReference>
<dbReference type="InterPro" id="IPR020541">
    <property type="entry name" value="Chorismate_synthase_CS"/>
</dbReference>
<dbReference type="NCBIfam" id="TIGR00033">
    <property type="entry name" value="aroC"/>
    <property type="match status" value="1"/>
</dbReference>
<dbReference type="NCBIfam" id="NF003793">
    <property type="entry name" value="PRK05382.1"/>
    <property type="match status" value="1"/>
</dbReference>
<dbReference type="PANTHER" id="PTHR21085">
    <property type="entry name" value="CHORISMATE SYNTHASE"/>
    <property type="match status" value="1"/>
</dbReference>
<dbReference type="PANTHER" id="PTHR21085:SF0">
    <property type="entry name" value="CHORISMATE SYNTHASE"/>
    <property type="match status" value="1"/>
</dbReference>
<dbReference type="Pfam" id="PF01264">
    <property type="entry name" value="Chorismate_synt"/>
    <property type="match status" value="1"/>
</dbReference>
<dbReference type="PIRSF" id="PIRSF001456">
    <property type="entry name" value="Chorismate_synth"/>
    <property type="match status" value="1"/>
</dbReference>
<dbReference type="SUPFAM" id="SSF103263">
    <property type="entry name" value="Chorismate synthase, AroC"/>
    <property type="match status" value="1"/>
</dbReference>
<dbReference type="PROSITE" id="PS00787">
    <property type="entry name" value="CHORISMATE_SYNTHASE_1"/>
    <property type="match status" value="1"/>
</dbReference>
<dbReference type="PROSITE" id="PS00788">
    <property type="entry name" value="CHORISMATE_SYNTHASE_2"/>
    <property type="match status" value="1"/>
</dbReference>
<dbReference type="PROSITE" id="PS00789">
    <property type="entry name" value="CHORISMATE_SYNTHASE_3"/>
    <property type="match status" value="1"/>
</dbReference>
<organism>
    <name type="scientific">Burkholderia orbicola (strain MC0-3)</name>
    <dbReference type="NCBI Taxonomy" id="406425"/>
    <lineage>
        <taxon>Bacteria</taxon>
        <taxon>Pseudomonadati</taxon>
        <taxon>Pseudomonadota</taxon>
        <taxon>Betaproteobacteria</taxon>
        <taxon>Burkholderiales</taxon>
        <taxon>Burkholderiaceae</taxon>
        <taxon>Burkholderia</taxon>
        <taxon>Burkholderia cepacia complex</taxon>
        <taxon>Burkholderia orbicola</taxon>
    </lineage>
</organism>
<evidence type="ECO:0000255" key="1">
    <source>
        <dbReference type="HAMAP-Rule" id="MF_00300"/>
    </source>
</evidence>
<comment type="function">
    <text evidence="1">Catalyzes the anti-1,4-elimination of the C-3 phosphate and the C-6 proR hydrogen from 5-enolpyruvylshikimate-3-phosphate (EPSP) to yield chorismate, which is the branch point compound that serves as the starting substrate for the three terminal pathways of aromatic amino acid biosynthesis. This reaction introduces a second double bond into the aromatic ring system.</text>
</comment>
<comment type="catalytic activity">
    <reaction evidence="1">
        <text>5-O-(1-carboxyvinyl)-3-phosphoshikimate = chorismate + phosphate</text>
        <dbReference type="Rhea" id="RHEA:21020"/>
        <dbReference type="ChEBI" id="CHEBI:29748"/>
        <dbReference type="ChEBI" id="CHEBI:43474"/>
        <dbReference type="ChEBI" id="CHEBI:57701"/>
        <dbReference type="EC" id="4.2.3.5"/>
    </reaction>
</comment>
<comment type="cofactor">
    <cofactor evidence="1">
        <name>FMNH2</name>
        <dbReference type="ChEBI" id="CHEBI:57618"/>
    </cofactor>
    <text evidence="1">Reduced FMN (FMNH(2)).</text>
</comment>
<comment type="pathway">
    <text evidence="1">Metabolic intermediate biosynthesis; chorismate biosynthesis; chorismate from D-erythrose 4-phosphate and phosphoenolpyruvate: step 7/7.</text>
</comment>
<comment type="subunit">
    <text evidence="1">Homotetramer.</text>
</comment>
<comment type="similarity">
    <text evidence="1">Belongs to the chorismate synthase family.</text>
</comment>
<proteinExistence type="inferred from homology"/>
<reference key="1">
    <citation type="submission" date="2008-02" db="EMBL/GenBank/DDBJ databases">
        <title>Complete sequence of chromosome 1 of Burkholderia cenocepacia MC0-3.</title>
        <authorList>
            <person name="Copeland A."/>
            <person name="Lucas S."/>
            <person name="Lapidus A."/>
            <person name="Barry K."/>
            <person name="Bruce D."/>
            <person name="Goodwin L."/>
            <person name="Glavina del Rio T."/>
            <person name="Dalin E."/>
            <person name="Tice H."/>
            <person name="Pitluck S."/>
            <person name="Chain P."/>
            <person name="Malfatti S."/>
            <person name="Shin M."/>
            <person name="Vergez L."/>
            <person name="Schmutz J."/>
            <person name="Larimer F."/>
            <person name="Land M."/>
            <person name="Hauser L."/>
            <person name="Kyrpides N."/>
            <person name="Mikhailova N."/>
            <person name="Tiedje J."/>
            <person name="Richardson P."/>
        </authorList>
    </citation>
    <scope>NUCLEOTIDE SEQUENCE [LARGE SCALE GENOMIC DNA]</scope>
    <source>
        <strain>MC0-3</strain>
    </source>
</reference>
<name>AROC_BURO0</name>
<keyword id="KW-0028">Amino-acid biosynthesis</keyword>
<keyword id="KW-0057">Aromatic amino acid biosynthesis</keyword>
<keyword id="KW-0274">FAD</keyword>
<keyword id="KW-0285">Flavoprotein</keyword>
<keyword id="KW-0288">FMN</keyword>
<keyword id="KW-0456">Lyase</keyword>
<keyword id="KW-0521">NADP</keyword>
<sequence>MSGNTLGTLFTVTTFGESHGPAIGCVIDGCPPGMGLTEADIQIELDRRKPGTSRHVTQRQEADEVEILSGVFEGVTTGTPIALLIRNTDQRSKDYGNIVETFRPGHADYTYWQKYGIRDYRGGGRSSARLTAPIVGAGAVAKKWLRERFGVEVRGYMSGLGEIDVPFVDWSYVHENPFFSPNAAVVPELEAYMDALRNDGDSIGARIDVVASGVPVGWGEPVFDRLDADIAKAMMSINAVKGVEIGAGFDSVAQRGSVHGDELTPAGFVGNHAGGVLGGISTGQDITVSIAIKPTSSIRTPRRSITKSGDEATVETFGRHDPCVGIRATPIAESMLALVLIDHALRHRAQCGDVETSTPKIAGSAT</sequence>
<protein>
    <recommendedName>
        <fullName evidence="1">Chorismate synthase</fullName>
        <shortName evidence="1">CS</shortName>
        <ecNumber evidence="1">4.2.3.5</ecNumber>
    </recommendedName>
    <alternativeName>
        <fullName evidence="1">5-enolpyruvylshikimate-3-phosphate phospholyase</fullName>
    </alternativeName>
</protein>
<gene>
    <name evidence="1" type="primary">aroC</name>
    <name type="ordered locus">Bcenmc03_1438</name>
</gene>
<accession>B1K077</accession>